<dbReference type="EMBL" id="AE009950">
    <property type="protein sequence ID" value="AAL81249.1"/>
    <property type="molecule type" value="Genomic_DNA"/>
</dbReference>
<dbReference type="RefSeq" id="WP_011012265.1">
    <property type="nucleotide sequence ID" value="NZ_CP023154.1"/>
</dbReference>
<dbReference type="PDB" id="4GKF">
    <property type="method" value="X-ray"/>
    <property type="resolution" value="2.10 A"/>
    <property type="chains" value="A/B=1-169"/>
</dbReference>
<dbReference type="PDBsum" id="4GKF"/>
<dbReference type="EMDB" id="EMD-5737"/>
<dbReference type="EMDB" id="EMD-5740"/>
<dbReference type="SMR" id="Q8U1T0"/>
<dbReference type="DIP" id="DIP-54369N"/>
<dbReference type="IntAct" id="Q8U1T0">
    <property type="interactions" value="4"/>
</dbReference>
<dbReference type="MINT" id="Q8U1T0"/>
<dbReference type="STRING" id="186497.PF1125"/>
<dbReference type="PaxDb" id="186497-PF1125"/>
<dbReference type="GeneID" id="41712934"/>
<dbReference type="KEGG" id="pfu:PF1125"/>
<dbReference type="PATRIC" id="fig|186497.12.peg.1186"/>
<dbReference type="eggNOG" id="arCOG02654">
    <property type="taxonomic scope" value="Archaea"/>
</dbReference>
<dbReference type="HOGENOM" id="CLU_120836_0_0_2"/>
<dbReference type="OrthoDB" id="134220at2157"/>
<dbReference type="PhylomeDB" id="Q8U1T0"/>
<dbReference type="EvolutionaryTrace" id="Q8U1T0"/>
<dbReference type="Proteomes" id="UP000001013">
    <property type="component" value="Chromosome"/>
</dbReference>
<dbReference type="GO" id="GO:0005737">
    <property type="term" value="C:cytoplasm"/>
    <property type="evidence" value="ECO:0007669"/>
    <property type="project" value="UniProtKB-SubCell"/>
</dbReference>
<dbReference type="GO" id="GO:0051607">
    <property type="term" value="P:defense response to virus"/>
    <property type="evidence" value="ECO:0007669"/>
    <property type="project" value="UniProtKB-KW"/>
</dbReference>
<dbReference type="CDD" id="cd09654">
    <property type="entry name" value="Cmr5_III-B"/>
    <property type="match status" value="1"/>
</dbReference>
<dbReference type="Gene3D" id="1.10.520.30">
    <property type="entry name" value="AF1862-like domain"/>
    <property type="match status" value="1"/>
</dbReference>
<dbReference type="InterPro" id="IPR023101">
    <property type="entry name" value="AF1862-like_dom_sf"/>
</dbReference>
<dbReference type="InterPro" id="IPR010160">
    <property type="entry name" value="CRISPR-assoc_prot_Cmr5"/>
</dbReference>
<dbReference type="NCBIfam" id="TIGR01881">
    <property type="entry name" value="cas_Cmr5"/>
    <property type="match status" value="1"/>
</dbReference>
<dbReference type="Pfam" id="PF09701">
    <property type="entry name" value="Cas_Cmr5"/>
    <property type="match status" value="1"/>
</dbReference>
<dbReference type="SUPFAM" id="SSF158568">
    <property type="entry name" value="AF1862-like"/>
    <property type="match status" value="1"/>
</dbReference>
<proteinExistence type="evidence at protein level"/>
<reference key="1">
    <citation type="journal article" date="1999" name="Genetics">
        <title>Divergence of the hyperthermophilic archaea Pyrococcus furiosus and P. horikoshii inferred from complete genomic sequences.</title>
        <authorList>
            <person name="Maeder D.L."/>
            <person name="Weiss R.B."/>
            <person name="Dunn D.M."/>
            <person name="Cherry J.L."/>
            <person name="Gonzalez J.M."/>
            <person name="DiRuggiero J."/>
            <person name="Robb F.T."/>
        </authorList>
    </citation>
    <scope>NUCLEOTIDE SEQUENCE [LARGE SCALE GENOMIC DNA]</scope>
    <source>
        <strain>ATCC 43587 / DSM 3638 / JCM 8422 / Vc1</strain>
    </source>
</reference>
<reference key="2">
    <citation type="journal article" date="2009" name="Cell">
        <title>RNA-guided RNA cleavage by a CRISPR RNA-Cas protein complex.</title>
        <authorList>
            <person name="Hale C.R."/>
            <person name="Zhao P."/>
            <person name="Olson S."/>
            <person name="Duff M.O."/>
            <person name="Graveley B.R."/>
            <person name="Wells L."/>
            <person name="Terns R.M."/>
            <person name="Terns M.P."/>
        </authorList>
    </citation>
    <scope>IDENTIFICATION BY MASS SPECTROMETRY</scope>
    <scope>FUNCTION IN CMR COMPLEX</scope>
    <scope>SUBCELLULAR LOCATION</scope>
    <scope>SUBUNIT</scope>
    <source>
        <strain>ATCC 43587 / DSM 3638 / JCM 8422 / Vc1</strain>
    </source>
</reference>
<reference key="3">
    <citation type="journal article" date="2014" name="Mol. Cell">
        <title>Structural model of a CRISPR RNA-silencing complex reveals the RNA-target cleavage activity in Cmr4.</title>
        <authorList>
            <person name="Benda C."/>
            <person name="Ebert J."/>
            <person name="Scheltema R.A."/>
            <person name="Schiller H.B."/>
            <person name="Baumgaertner M."/>
            <person name="Bonneau F."/>
            <person name="Mann M."/>
            <person name="Conti E."/>
        </authorList>
    </citation>
    <scope>FUNCTION</scope>
    <scope>INTERACTION WITH CMR2; CMR4 AND CMR6</scope>
    <scope>SUBUNIT</scope>
    <source>
        <strain>ATCC 43587 / DSM 3638 / JCM 8422 / Vc1</strain>
    </source>
</reference>
<reference key="4">
    <citation type="journal article" date="2013" name="FEBS Lett.">
        <title>Crystal structure of Cmr5 from Pyrococcus furiosus and its functional implications.</title>
        <authorList>
            <person name="Park J.H."/>
            <person name="Sun J."/>
            <person name="Park S.Y."/>
            <person name="Hwang H.J."/>
            <person name="Park M.Y."/>
            <person name="Shin M."/>
            <person name="Kim J.S."/>
        </authorList>
    </citation>
    <scope>X-RAY CRYSTALLOGRAPHY (2.1 ANGSTROMS)</scope>
    <scope>INTERACTION WITH CMR4</scope>
    <scope>SUBUNIT</scope>
    <source>
        <strain>ATCC 43587 / DSM 3638 / JCM 8422 / Vc1</strain>
    </source>
</reference>
<reference key="5">
    <citation type="journal article" date="2013" name="Mol. Cell">
        <title>Structure of an RNA silencing complex of the CRISPR-Cas immune system.</title>
        <authorList>
            <person name="Spilman M."/>
            <person name="Cocozaki A."/>
            <person name="Hale C."/>
            <person name="Shao Y."/>
            <person name="Ramia N."/>
            <person name="Terns R."/>
            <person name="Terns M."/>
            <person name="Li H."/>
            <person name="Stagg S."/>
        </authorList>
    </citation>
    <scope>STRUCTURE BY ELECTRON MICROSCOPY (12.0 ANGSTROMS) OF WHOLE CMR COMPLEX WITH TARGET RNA</scope>
    <scope>SUBUNIT</scope>
    <source>
        <strain>ATCC 43587 / DSM 3638 / JCM 8422 / Vc1</strain>
    </source>
</reference>
<gene>
    <name evidence="5" type="primary">cmr5</name>
    <name type="ordered locus">PF1125</name>
</gene>
<accession>Q8U1T0</accession>
<name>CMR5_PYRFU</name>
<feature type="chain" id="PRO_0000418079" description="CRISPR system Cmr subunit Cmr5">
    <location>
        <begin position="1"/>
        <end position="169"/>
    </location>
</feature>
<feature type="helix" evidence="7">
    <location>
        <begin position="18"/>
        <end position="36"/>
    </location>
</feature>
<feature type="helix" evidence="7">
    <location>
        <begin position="39"/>
        <end position="59"/>
    </location>
</feature>
<feature type="helix" evidence="7">
    <location>
        <begin position="61"/>
        <end position="71"/>
    </location>
</feature>
<feature type="helix" evidence="7">
    <location>
        <begin position="76"/>
        <end position="83"/>
    </location>
</feature>
<feature type="strand" evidence="7">
    <location>
        <begin position="88"/>
        <end position="90"/>
    </location>
</feature>
<feature type="helix" evidence="7">
    <location>
        <begin position="94"/>
        <end position="96"/>
    </location>
</feature>
<feature type="helix" evidence="7">
    <location>
        <begin position="103"/>
        <end position="118"/>
    </location>
</feature>
<feature type="helix" evidence="7">
    <location>
        <begin position="127"/>
        <end position="129"/>
    </location>
</feature>
<feature type="helix" evidence="7">
    <location>
        <begin position="133"/>
        <end position="157"/>
    </location>
</feature>
<protein>
    <recommendedName>
        <fullName>CRISPR system Cmr subunit Cmr5</fullName>
    </recommendedName>
    <alternativeName>
        <fullName>CRISPR type III-B/RAMP module-associated protein Cmr5</fullName>
    </alternativeName>
</protein>
<sequence>MEVHMLSKDNKKSIRKTLEQRRGEYAYYVIKEVADLNDKQLEEKYASLVKKAPVMILSNGLLQTLAFLLAKAETSPEKANQILSRVNEYPPRFIEKLGNDKDEHLLLYLHIVYWLRENVDRNIDVKTLLSQDYSKVLWATKEAIALLNWMRRFAVAMLKEEGKENEGSS</sequence>
<comment type="function">
    <text evidence="1 4">CRISPR (clustered regularly interspaced short palindromic repeat), is an adaptive immune system that provides protection against mobile genetic elements (viruses, transposable elements and conjugative plasmids). CRISPR clusters contain sequences complementary to antecedent mobile elements and target invading nucleic acids. CRISPR clusters are transcribed and processed into CRISPR RNA (crRNA), formerly called psiRNA (prokaryotic silencing) in this organism. Part of the Cmr ribonucleoprotein complex which has divalent cation-dependent endoribonuclease activity specific for ssRNA complementary to the crRNA (target NRA), generating 5' hydroxy- and 3' phosphate or 2'-3' cyclic phosphate termini. Cmr4 is probably the subunit that cleaves target RNA (PubMed:25280103). Cmr complex does not cleave ssDNA complementary to the crRNA. Cleavage of invading RNA is guided by the crRNA; substrate cleavage occurs a fixed distance (14 nt) from the 3' end of the crRNA. In vitro reconstitution shows Cmr1-2 and Cmr5 are not absolutely necessary for target cleavage (PubMed:19945378).</text>
</comment>
<comment type="subunit">
    <text evidence="1 2 3 4">Monomer in isolation (PubMed:23370277). Part of the type III-B Cmr ribonucleoprotein (RNP) complex, an elongated RNP with Cmr2 and Cmr3 as the base, with Cmr4 and Cmr5 forming a helical core along the mature crRNA (39 or 45 nt in length), while the complex is capped by Cmr6 and Cmr1. The 5' end of the crRNA is bound to Cmr2 and Cmr3, while Cmr6 and a Cmr1 subunit (Cmr1-1 or Cmr1-2) cap the 3' end of the crRNA. The target RNA lies antiparallel to the crRNA, with its 5' end near Cmr1 and Cmr6 and its 3' end near Cmr2 and Cmr3; major target cleavage occurs nears the junction of Cmr1/Cmr6 and Cmr4/Cmr, with minor cleavage occurring at 6 nt intervals which coincide with the proposed spacing of Cmr4 subunits (PubMed:24119404, PubMed:25280103). Interacts with Cmr4 (PubMed:23370277). Interacts with Cmr2, Cmr4 and Cmr6 (PubMed:25280103).</text>
</comment>
<comment type="interaction">
    <interactant intactId="EBI-2504964">
        <id>Q8U1T0</id>
    </interactant>
    <interactant intactId="EBI-2504950">
        <id>Q8U1S9</id>
        <label>cmr4</label>
    </interactant>
    <organismsDiffer>false</organismsDiffer>
    <experiments>2</experiments>
</comment>
<comment type="subcellular location">
    <subcellularLocation>
        <location evidence="1">Cytoplasm</location>
    </subcellularLocation>
</comment>
<comment type="similarity">
    <text evidence="6">Belongs to the CRISPR system Cmr5 family.</text>
</comment>
<keyword id="KW-0002">3D-structure</keyword>
<keyword id="KW-0051">Antiviral defense</keyword>
<keyword id="KW-0963">Cytoplasm</keyword>
<keyword id="KW-1185">Reference proteome</keyword>
<organism>
    <name type="scientific">Pyrococcus furiosus (strain ATCC 43587 / DSM 3638 / JCM 8422 / Vc1)</name>
    <dbReference type="NCBI Taxonomy" id="186497"/>
    <lineage>
        <taxon>Archaea</taxon>
        <taxon>Methanobacteriati</taxon>
        <taxon>Methanobacteriota</taxon>
        <taxon>Thermococci</taxon>
        <taxon>Thermococcales</taxon>
        <taxon>Thermococcaceae</taxon>
        <taxon>Pyrococcus</taxon>
    </lineage>
</organism>
<evidence type="ECO:0000269" key="1">
    <source>
    </source>
</evidence>
<evidence type="ECO:0000269" key="2">
    <source>
    </source>
</evidence>
<evidence type="ECO:0000269" key="3">
    <source>
    </source>
</evidence>
<evidence type="ECO:0000269" key="4">
    <source>
    </source>
</evidence>
<evidence type="ECO:0000303" key="5">
    <source>
    </source>
</evidence>
<evidence type="ECO:0000305" key="6"/>
<evidence type="ECO:0007829" key="7">
    <source>
        <dbReference type="PDB" id="4GKF"/>
    </source>
</evidence>